<keyword id="KW-0235">DNA replication</keyword>
<keyword id="KW-0239">DNA-directed DNA polymerase</keyword>
<keyword id="KW-0548">Nucleotidyltransferase</keyword>
<keyword id="KW-1185">Reference proteome</keyword>
<keyword id="KW-0808">Transferase</keyword>
<dbReference type="EC" id="2.7.7.7"/>
<dbReference type="EMBL" id="AE005674">
    <property type="protein sequence ID" value="AAN43412.2"/>
    <property type="molecule type" value="Genomic_DNA"/>
</dbReference>
<dbReference type="EMBL" id="AE014073">
    <property type="protein sequence ID" value="AAP17234.1"/>
    <property type="molecule type" value="Genomic_DNA"/>
</dbReference>
<dbReference type="RefSeq" id="NP_707705.2">
    <property type="nucleotide sequence ID" value="NC_004337.2"/>
</dbReference>
<dbReference type="RefSeq" id="WP_000916763.1">
    <property type="nucleotide sequence ID" value="NZ_WPGW01000041.1"/>
</dbReference>
<dbReference type="BMRB" id="P0ABT1"/>
<dbReference type="SMR" id="P0ABT1"/>
<dbReference type="STRING" id="198214.SF1853"/>
<dbReference type="PaxDb" id="198214-SF1853"/>
<dbReference type="GeneID" id="1023376"/>
<dbReference type="GeneID" id="93776109"/>
<dbReference type="KEGG" id="sfl:SF1853"/>
<dbReference type="KEGG" id="sfx:S1918"/>
<dbReference type="PATRIC" id="fig|198214.7.peg.2206"/>
<dbReference type="HOGENOM" id="CLU_176900_0_0_6"/>
<dbReference type="Proteomes" id="UP000001006">
    <property type="component" value="Chromosome"/>
</dbReference>
<dbReference type="Proteomes" id="UP000002673">
    <property type="component" value="Chromosome"/>
</dbReference>
<dbReference type="GO" id="GO:0003677">
    <property type="term" value="F:DNA binding"/>
    <property type="evidence" value="ECO:0007669"/>
    <property type="project" value="InterPro"/>
</dbReference>
<dbReference type="GO" id="GO:0003887">
    <property type="term" value="F:DNA-directed DNA polymerase activity"/>
    <property type="evidence" value="ECO:0007669"/>
    <property type="project" value="UniProtKB-KW"/>
</dbReference>
<dbReference type="GO" id="GO:0006260">
    <property type="term" value="P:DNA replication"/>
    <property type="evidence" value="ECO:0007669"/>
    <property type="project" value="UniProtKB-KW"/>
</dbReference>
<dbReference type="FunFam" id="1.20.58.250:FF:000001">
    <property type="entry name" value="DNA polymerase III, theta subunit"/>
    <property type="match status" value="1"/>
</dbReference>
<dbReference type="Gene3D" id="1.20.58.250">
    <property type="entry name" value="DNA polymerase III-theta"/>
    <property type="match status" value="1"/>
</dbReference>
<dbReference type="InterPro" id="IPR009052">
    <property type="entry name" value="DNA_pol_III_theta_bac"/>
</dbReference>
<dbReference type="InterPro" id="IPR036745">
    <property type="entry name" value="PolIII_theta_sf"/>
</dbReference>
<dbReference type="NCBIfam" id="NF008207">
    <property type="entry name" value="PRK10969.1"/>
    <property type="match status" value="1"/>
</dbReference>
<dbReference type="Pfam" id="PF06440">
    <property type="entry name" value="DNA_pol3_theta"/>
    <property type="match status" value="1"/>
</dbReference>
<dbReference type="SUPFAM" id="SSF46575">
    <property type="entry name" value="DNA polymerase III theta subunit-like"/>
    <property type="match status" value="1"/>
</dbReference>
<sequence>MLKNLAKLDQTEMDKVNVDLAAAGVAFKERYNMPVIAEAVEREQPEHLRSWFRERLIAHRLASVNLSRLPYEPKLK</sequence>
<protein>
    <recommendedName>
        <fullName>DNA polymerase III subunit theta</fullName>
        <ecNumber>2.7.7.7</ecNumber>
    </recommendedName>
</protein>
<organism>
    <name type="scientific">Shigella flexneri</name>
    <dbReference type="NCBI Taxonomy" id="623"/>
    <lineage>
        <taxon>Bacteria</taxon>
        <taxon>Pseudomonadati</taxon>
        <taxon>Pseudomonadota</taxon>
        <taxon>Gammaproteobacteria</taxon>
        <taxon>Enterobacterales</taxon>
        <taxon>Enterobacteriaceae</taxon>
        <taxon>Shigella</taxon>
    </lineage>
</organism>
<reference key="1">
    <citation type="journal article" date="2002" name="Nucleic Acids Res.">
        <title>Genome sequence of Shigella flexneri 2a: insights into pathogenicity through comparison with genomes of Escherichia coli K12 and O157.</title>
        <authorList>
            <person name="Jin Q."/>
            <person name="Yuan Z."/>
            <person name="Xu J."/>
            <person name="Wang Y."/>
            <person name="Shen Y."/>
            <person name="Lu W."/>
            <person name="Wang J."/>
            <person name="Liu H."/>
            <person name="Yang J."/>
            <person name="Yang F."/>
            <person name="Zhang X."/>
            <person name="Zhang J."/>
            <person name="Yang G."/>
            <person name="Wu H."/>
            <person name="Qu D."/>
            <person name="Dong J."/>
            <person name="Sun L."/>
            <person name="Xue Y."/>
            <person name="Zhao A."/>
            <person name="Gao Y."/>
            <person name="Zhu J."/>
            <person name="Kan B."/>
            <person name="Ding K."/>
            <person name="Chen S."/>
            <person name="Cheng H."/>
            <person name="Yao Z."/>
            <person name="He B."/>
            <person name="Chen R."/>
            <person name="Ma D."/>
            <person name="Qiang B."/>
            <person name="Wen Y."/>
            <person name="Hou Y."/>
            <person name="Yu J."/>
        </authorList>
    </citation>
    <scope>NUCLEOTIDE SEQUENCE [LARGE SCALE GENOMIC DNA]</scope>
    <source>
        <strain>301 / Serotype 2a</strain>
    </source>
</reference>
<reference key="2">
    <citation type="journal article" date="2003" name="Infect. Immun.">
        <title>Complete genome sequence and comparative genomics of Shigella flexneri serotype 2a strain 2457T.</title>
        <authorList>
            <person name="Wei J."/>
            <person name="Goldberg M.B."/>
            <person name="Burland V."/>
            <person name="Venkatesan M.M."/>
            <person name="Deng W."/>
            <person name="Fournier G."/>
            <person name="Mayhew G.F."/>
            <person name="Plunkett G. III"/>
            <person name="Rose D.J."/>
            <person name="Darling A."/>
            <person name="Mau B."/>
            <person name="Perna N.T."/>
            <person name="Payne S.M."/>
            <person name="Runyen-Janecky L.J."/>
            <person name="Zhou S."/>
            <person name="Schwartz D.C."/>
            <person name="Blattner F.R."/>
        </authorList>
    </citation>
    <scope>NUCLEOTIDE SEQUENCE [LARGE SCALE GENOMIC DNA]</scope>
    <source>
        <strain>ATCC 700930 / 2457T / Serotype 2a</strain>
    </source>
</reference>
<proteinExistence type="inferred from homology"/>
<comment type="function">
    <text evidence="1">DNA polymerase III is a complex, multichain enzyme responsible for most of the replicative synthesis in bacteria. This DNA polymerase also exhibits 3' to 5' exonuclease activity (By similarity).</text>
</comment>
<comment type="function">
    <text evidence="1">The exact function of the theta subunit is unknown.</text>
</comment>
<comment type="catalytic activity">
    <reaction>
        <text>DNA(n) + a 2'-deoxyribonucleoside 5'-triphosphate = DNA(n+1) + diphosphate</text>
        <dbReference type="Rhea" id="RHEA:22508"/>
        <dbReference type="Rhea" id="RHEA-COMP:17339"/>
        <dbReference type="Rhea" id="RHEA-COMP:17340"/>
        <dbReference type="ChEBI" id="CHEBI:33019"/>
        <dbReference type="ChEBI" id="CHEBI:61560"/>
        <dbReference type="ChEBI" id="CHEBI:173112"/>
        <dbReference type="EC" id="2.7.7.7"/>
    </reaction>
</comment>
<comment type="subunit">
    <text evidence="1">The DNA polymerase holoenzyme is a complex that contains 10 different types of subunits. These subunits are organized into 3 functionally essential subassemblies: the pol III core, the beta sliding clamp processivity factor and the clamp-loading complex. The pol III core (subunits alpha,epsilon and theta) contains the polymerase and the 3'-5' exonuclease proofreading activities. The polymerase is tethered to the template via the sliding clamp processivity factor. The clamp-loading complex assembles the beta processivity factor onto the primer template and plays a central role in the organization and communication at the replication fork. This complex contains delta, delta', psi and chi, and copies of either or both of two different DnaX proteins, gamma and tau. The composition of the holoenzyme is, therefore: (alpha,epsilon,theta)[2]-(gamma/tau)[3]-delta,delta', psi,chi-beta[4] (By similarity).</text>
</comment>
<gene>
    <name type="primary">holE</name>
    <name type="ordered locus">SF1852.1</name>
    <name type="ordered locus">S1918</name>
</gene>
<evidence type="ECO:0000250" key="1"/>
<accession>P0ABT1</accession>
<accession>P28689</accession>
<feature type="chain" id="PRO_0000105525" description="DNA polymerase III subunit theta">
    <location>
        <begin position="1"/>
        <end position="76"/>
    </location>
</feature>
<name>HOLE_SHIFL</name>